<keyword id="KW-0028">Amino-acid biosynthesis</keyword>
<keyword id="KW-0368">Histidine biosynthesis</keyword>
<keyword id="KW-0378">Hydrolase</keyword>
<keyword id="KW-0486">Methionine biosynthesis</keyword>
<keyword id="KW-0511">Multifunctional enzyme</keyword>
<keyword id="KW-0521">NADP</keyword>
<keyword id="KW-0554">One-carbon metabolism</keyword>
<keyword id="KW-0560">Oxidoreductase</keyword>
<keyword id="KW-0658">Purine biosynthesis</keyword>
<keyword id="KW-1185">Reference proteome</keyword>
<organism>
    <name type="scientific">Aliarcobacter butzleri (strain RM4018)</name>
    <name type="common">Arcobacter butzleri</name>
    <dbReference type="NCBI Taxonomy" id="367737"/>
    <lineage>
        <taxon>Bacteria</taxon>
        <taxon>Pseudomonadati</taxon>
        <taxon>Campylobacterota</taxon>
        <taxon>Epsilonproteobacteria</taxon>
        <taxon>Campylobacterales</taxon>
        <taxon>Arcobacteraceae</taxon>
        <taxon>Aliarcobacter</taxon>
    </lineage>
</organism>
<gene>
    <name evidence="1" type="primary">folD</name>
    <name type="ordered locus">Abu_0637</name>
</gene>
<evidence type="ECO:0000255" key="1">
    <source>
        <dbReference type="HAMAP-Rule" id="MF_01576"/>
    </source>
</evidence>
<feature type="chain" id="PRO_0000340574" description="Bifunctional protein FolD">
    <location>
        <begin position="1"/>
        <end position="287"/>
    </location>
</feature>
<feature type="binding site" evidence="1">
    <location>
        <begin position="164"/>
        <end position="166"/>
    </location>
    <ligand>
        <name>NADP(+)</name>
        <dbReference type="ChEBI" id="CHEBI:58349"/>
    </ligand>
</feature>
<feature type="binding site" evidence="1">
    <location>
        <position position="189"/>
    </location>
    <ligand>
        <name>NADP(+)</name>
        <dbReference type="ChEBI" id="CHEBI:58349"/>
    </ligand>
</feature>
<feature type="binding site" evidence="1">
    <location>
        <position position="230"/>
    </location>
    <ligand>
        <name>NADP(+)</name>
        <dbReference type="ChEBI" id="CHEBI:58349"/>
    </ligand>
</feature>
<proteinExistence type="inferred from homology"/>
<name>FOLD_ALIB4</name>
<dbReference type="EC" id="1.5.1.5" evidence="1"/>
<dbReference type="EC" id="3.5.4.9" evidence="1"/>
<dbReference type="EMBL" id="CP000361">
    <property type="protein sequence ID" value="ABV66902.1"/>
    <property type="molecule type" value="Genomic_DNA"/>
</dbReference>
<dbReference type="RefSeq" id="WP_004510693.1">
    <property type="nucleotide sequence ID" value="NC_009850.1"/>
</dbReference>
<dbReference type="SMR" id="A8ESH8"/>
<dbReference type="STRING" id="367737.Abu_0637"/>
<dbReference type="GeneID" id="24303819"/>
<dbReference type="KEGG" id="abu:Abu_0637"/>
<dbReference type="eggNOG" id="COG0190">
    <property type="taxonomic scope" value="Bacteria"/>
</dbReference>
<dbReference type="HOGENOM" id="CLU_034045_2_1_7"/>
<dbReference type="UniPathway" id="UPA00193"/>
<dbReference type="Proteomes" id="UP000001136">
    <property type="component" value="Chromosome"/>
</dbReference>
<dbReference type="GO" id="GO:0005829">
    <property type="term" value="C:cytosol"/>
    <property type="evidence" value="ECO:0007669"/>
    <property type="project" value="TreeGrafter"/>
</dbReference>
<dbReference type="GO" id="GO:0004477">
    <property type="term" value="F:methenyltetrahydrofolate cyclohydrolase activity"/>
    <property type="evidence" value="ECO:0007669"/>
    <property type="project" value="UniProtKB-UniRule"/>
</dbReference>
<dbReference type="GO" id="GO:0004488">
    <property type="term" value="F:methylenetetrahydrofolate dehydrogenase (NADP+) activity"/>
    <property type="evidence" value="ECO:0007669"/>
    <property type="project" value="UniProtKB-UniRule"/>
</dbReference>
<dbReference type="GO" id="GO:0000105">
    <property type="term" value="P:L-histidine biosynthetic process"/>
    <property type="evidence" value="ECO:0007669"/>
    <property type="project" value="UniProtKB-KW"/>
</dbReference>
<dbReference type="GO" id="GO:0009086">
    <property type="term" value="P:methionine biosynthetic process"/>
    <property type="evidence" value="ECO:0007669"/>
    <property type="project" value="UniProtKB-KW"/>
</dbReference>
<dbReference type="GO" id="GO:0006164">
    <property type="term" value="P:purine nucleotide biosynthetic process"/>
    <property type="evidence" value="ECO:0007669"/>
    <property type="project" value="UniProtKB-KW"/>
</dbReference>
<dbReference type="GO" id="GO:0035999">
    <property type="term" value="P:tetrahydrofolate interconversion"/>
    <property type="evidence" value="ECO:0007669"/>
    <property type="project" value="UniProtKB-UniRule"/>
</dbReference>
<dbReference type="CDD" id="cd01080">
    <property type="entry name" value="NAD_bind_m-THF_DH_Cyclohyd"/>
    <property type="match status" value="1"/>
</dbReference>
<dbReference type="FunFam" id="3.40.50.10860:FF:000001">
    <property type="entry name" value="Bifunctional protein FolD"/>
    <property type="match status" value="1"/>
</dbReference>
<dbReference type="FunFam" id="3.40.50.720:FF:000094">
    <property type="entry name" value="Bifunctional protein FolD"/>
    <property type="match status" value="1"/>
</dbReference>
<dbReference type="Gene3D" id="3.40.50.10860">
    <property type="entry name" value="Leucine Dehydrogenase, chain A, domain 1"/>
    <property type="match status" value="1"/>
</dbReference>
<dbReference type="Gene3D" id="3.40.50.720">
    <property type="entry name" value="NAD(P)-binding Rossmann-like Domain"/>
    <property type="match status" value="1"/>
</dbReference>
<dbReference type="HAMAP" id="MF_01576">
    <property type="entry name" value="THF_DHG_CYH"/>
    <property type="match status" value="1"/>
</dbReference>
<dbReference type="InterPro" id="IPR046346">
    <property type="entry name" value="Aminoacid_DH-like_N_sf"/>
</dbReference>
<dbReference type="InterPro" id="IPR036291">
    <property type="entry name" value="NAD(P)-bd_dom_sf"/>
</dbReference>
<dbReference type="InterPro" id="IPR000672">
    <property type="entry name" value="THF_DH/CycHdrlase"/>
</dbReference>
<dbReference type="InterPro" id="IPR020630">
    <property type="entry name" value="THF_DH/CycHdrlase_cat_dom"/>
</dbReference>
<dbReference type="InterPro" id="IPR020867">
    <property type="entry name" value="THF_DH/CycHdrlase_CS"/>
</dbReference>
<dbReference type="InterPro" id="IPR020631">
    <property type="entry name" value="THF_DH/CycHdrlase_NAD-bd_dom"/>
</dbReference>
<dbReference type="NCBIfam" id="NF008058">
    <property type="entry name" value="PRK10792.1"/>
    <property type="match status" value="1"/>
</dbReference>
<dbReference type="NCBIfam" id="NF010783">
    <property type="entry name" value="PRK14186.1"/>
    <property type="match status" value="1"/>
</dbReference>
<dbReference type="NCBIfam" id="NF010787">
    <property type="entry name" value="PRK14191.1"/>
    <property type="match status" value="1"/>
</dbReference>
<dbReference type="PANTHER" id="PTHR48099:SF5">
    <property type="entry name" value="C-1-TETRAHYDROFOLATE SYNTHASE, CYTOPLASMIC"/>
    <property type="match status" value="1"/>
</dbReference>
<dbReference type="PANTHER" id="PTHR48099">
    <property type="entry name" value="C-1-TETRAHYDROFOLATE SYNTHASE, CYTOPLASMIC-RELATED"/>
    <property type="match status" value="1"/>
</dbReference>
<dbReference type="Pfam" id="PF00763">
    <property type="entry name" value="THF_DHG_CYH"/>
    <property type="match status" value="1"/>
</dbReference>
<dbReference type="Pfam" id="PF02882">
    <property type="entry name" value="THF_DHG_CYH_C"/>
    <property type="match status" value="1"/>
</dbReference>
<dbReference type="PRINTS" id="PR00085">
    <property type="entry name" value="THFDHDRGNASE"/>
</dbReference>
<dbReference type="SUPFAM" id="SSF53223">
    <property type="entry name" value="Aminoacid dehydrogenase-like, N-terminal domain"/>
    <property type="match status" value="1"/>
</dbReference>
<dbReference type="SUPFAM" id="SSF51735">
    <property type="entry name" value="NAD(P)-binding Rossmann-fold domains"/>
    <property type="match status" value="1"/>
</dbReference>
<dbReference type="PROSITE" id="PS00766">
    <property type="entry name" value="THF_DHG_CYH_1"/>
    <property type="match status" value="1"/>
</dbReference>
<dbReference type="PROSITE" id="PS00767">
    <property type="entry name" value="THF_DHG_CYH_2"/>
    <property type="match status" value="1"/>
</dbReference>
<accession>A8ESH8</accession>
<sequence>MILLDGKALSEKIKAEVKLEVEEIVKEKEITPGLAVILVGNDPASATYVASKAKSCENAGIYSVVHKMPETITQEELLQTIAMMNKNPKLDGILVQLPLPKQIDTTVVLEAIDPLKDVDGFHPYNVGRMVSNLDAFLPATPFGVMRMFEEYGIELSGKNVVVIGSSDIVGKPMASLLINAKATVTVCNSRTKDLKAHTLAADIVVIAVGVPFLLKEDMVKDGAIVIDVGINRLDTGKLVGDADFEGLKNKCSFLTPVPGGVGPMTIAMLLKNTIKASKLREKRENRC</sequence>
<protein>
    <recommendedName>
        <fullName evidence="1">Bifunctional protein FolD</fullName>
    </recommendedName>
    <domain>
        <recommendedName>
            <fullName evidence="1">Methylenetetrahydrofolate dehydrogenase</fullName>
            <ecNumber evidence="1">1.5.1.5</ecNumber>
        </recommendedName>
    </domain>
    <domain>
        <recommendedName>
            <fullName evidence="1">Methenyltetrahydrofolate cyclohydrolase</fullName>
            <ecNumber evidence="1">3.5.4.9</ecNumber>
        </recommendedName>
    </domain>
</protein>
<comment type="function">
    <text evidence="1">Catalyzes the oxidation of 5,10-methylenetetrahydrofolate to 5,10-methenyltetrahydrofolate and then the hydrolysis of 5,10-methenyltetrahydrofolate to 10-formyltetrahydrofolate.</text>
</comment>
<comment type="catalytic activity">
    <reaction evidence="1">
        <text>(6R)-5,10-methylene-5,6,7,8-tetrahydrofolate + NADP(+) = (6R)-5,10-methenyltetrahydrofolate + NADPH</text>
        <dbReference type="Rhea" id="RHEA:22812"/>
        <dbReference type="ChEBI" id="CHEBI:15636"/>
        <dbReference type="ChEBI" id="CHEBI:57455"/>
        <dbReference type="ChEBI" id="CHEBI:57783"/>
        <dbReference type="ChEBI" id="CHEBI:58349"/>
        <dbReference type="EC" id="1.5.1.5"/>
    </reaction>
</comment>
<comment type="catalytic activity">
    <reaction evidence="1">
        <text>(6R)-5,10-methenyltetrahydrofolate + H2O = (6R)-10-formyltetrahydrofolate + H(+)</text>
        <dbReference type="Rhea" id="RHEA:23700"/>
        <dbReference type="ChEBI" id="CHEBI:15377"/>
        <dbReference type="ChEBI" id="CHEBI:15378"/>
        <dbReference type="ChEBI" id="CHEBI:57455"/>
        <dbReference type="ChEBI" id="CHEBI:195366"/>
        <dbReference type="EC" id="3.5.4.9"/>
    </reaction>
</comment>
<comment type="pathway">
    <text evidence="1">One-carbon metabolism; tetrahydrofolate interconversion.</text>
</comment>
<comment type="subunit">
    <text evidence="1">Homodimer.</text>
</comment>
<comment type="similarity">
    <text evidence="1">Belongs to the tetrahydrofolate dehydrogenase/cyclohydrolase family.</text>
</comment>
<reference key="1">
    <citation type="journal article" date="2007" name="PLoS ONE">
        <title>The complete genome sequence and analysis of the Epsilonproteobacterium Arcobacter butzleri.</title>
        <authorList>
            <person name="Miller W.G."/>
            <person name="Parker C.T."/>
            <person name="Rubenfield M."/>
            <person name="Mendz G.L."/>
            <person name="Woesten M.M.S.M."/>
            <person name="Ussery D.W."/>
            <person name="Stolz J.F."/>
            <person name="Binnewies T.T."/>
            <person name="Hallin P.F."/>
            <person name="Wang G."/>
            <person name="Malek J.A."/>
            <person name="Rogosin A."/>
            <person name="Stanker L.H."/>
            <person name="Mandrell R.E."/>
        </authorList>
    </citation>
    <scope>NUCLEOTIDE SEQUENCE [LARGE SCALE GENOMIC DNA]</scope>
    <source>
        <strain>RM4018</strain>
    </source>
</reference>